<protein>
    <recommendedName>
        <fullName evidence="2">Bacterial ferritin</fullName>
        <ecNumber evidence="2">1.16.3.1</ecNumber>
    </recommendedName>
    <alternativeName>
        <fullName evidence="1">Bacterial non-heme ferritin</fullName>
    </alternativeName>
    <alternativeName>
        <fullName evidence="4">Bacterioferritin subunit 2</fullName>
        <shortName>BFR 2</shortName>
    </alternativeName>
</protein>
<reference key="1">
    <citation type="journal article" date="1997" name="Gene">
        <title>Evidence for two types of subunits in the bacterioferritin of Magnetospirillum magnetotacticum.</title>
        <authorList>
            <person name="Bertani L.E."/>
            <person name="Huang J.S."/>
            <person name="Weir B.A."/>
            <person name="Kirschvink J.L."/>
        </authorList>
    </citation>
    <scope>NUCLEOTIDE SEQUENCE [GENOMIC DNA]</scope>
    <scope>PROBABLY DOES NOT BIND HEME</scope>
    <source>
        <strain>ATCC 31632 / DSM 3856 / JCM 21281 / NBRC 15272 / NCIMB 12542 / MS-1</strain>
    </source>
</reference>
<comment type="function">
    <text evidence="2">Iron-storage protein, whose ferroxidase center binds Fe(2+), oxidizes it using dioxygen to Fe(3+), and participates in the subsequent Fe(3+) oxide mineral core formation within the central cavity of the BFR protein shell.</text>
</comment>
<comment type="catalytic activity">
    <reaction evidence="2">
        <text>4 Fe(2+) + O2 + 4 H(+) = 4 Fe(3+) + 2 H2O</text>
        <dbReference type="Rhea" id="RHEA:11148"/>
        <dbReference type="ChEBI" id="CHEBI:15377"/>
        <dbReference type="ChEBI" id="CHEBI:15378"/>
        <dbReference type="ChEBI" id="CHEBI:15379"/>
        <dbReference type="ChEBI" id="CHEBI:29033"/>
        <dbReference type="ChEBI" id="CHEBI:29034"/>
        <dbReference type="EC" id="1.16.3.1"/>
    </reaction>
</comment>
<comment type="catalytic activity">
    <reaction evidence="2">
        <text>Fe(2+)(in) = Fe(2+)(out)</text>
        <dbReference type="Rhea" id="RHEA:28486"/>
        <dbReference type="ChEBI" id="CHEBI:29033"/>
    </reaction>
</comment>
<comment type="subunit">
    <text evidence="2">Heterooligomer of 24 subunits, arranged as 12 dimers, that are packed together to form an approximately spherical molecule with a central cavity, in which large amounts of iron can be deposited.</text>
</comment>
<comment type="similarity">
    <text evidence="5">Belongs to the bacterioferritin family.</text>
</comment>
<comment type="caution">
    <text evidence="6">This protein does not have the conserved Met residue required for heme-binding, instead it has Leu-52 (PubMed:9409768). The heme-binding subunit is probably Bfr1 (Probable) (PubMed:9409768).</text>
</comment>
<keyword id="KW-0406">Ion transport</keyword>
<keyword id="KW-0408">Iron</keyword>
<keyword id="KW-0409">Iron storage</keyword>
<keyword id="KW-0410">Iron transport</keyword>
<keyword id="KW-0560">Oxidoreductase</keyword>
<keyword id="KW-0813">Transport</keyword>
<organism>
    <name type="scientific">Paramagnetospirillum magnetotacticum</name>
    <name type="common">Aquaspirillum magnetotacticum</name>
    <dbReference type="NCBI Taxonomy" id="188"/>
    <lineage>
        <taxon>Bacteria</taxon>
        <taxon>Pseudomonadati</taxon>
        <taxon>Pseudomonadota</taxon>
        <taxon>Alphaproteobacteria</taxon>
        <taxon>Rhodospirillales</taxon>
        <taxon>Magnetospirillaceae</taxon>
        <taxon>Paramagnetospirillum</taxon>
    </lineage>
</organism>
<proteinExistence type="inferred from homology"/>
<accession>O50171</accession>
<sequence length="164" mass="18491">MKGKKSVISRLNKLLVGELVAADQYFVHSRMYQEWGLQKLYERIDHERMDELEHADLLIRRILFLEGTPDISKRPGPNIGKDVPSMLKNDLDYELAVIAELKEVIAHCEGPKRTMTAAASCSTILEETEQDHTLWLEQQLGLIARMGLQNYIQSAAGDIAQGAS</sequence>
<gene>
    <name evidence="4" type="primary">bfr2</name>
</gene>
<evidence type="ECO:0000250" key="1">
    <source>
        <dbReference type="UniProtKB" id="P0A998"/>
    </source>
</evidence>
<evidence type="ECO:0000250" key="2">
    <source>
        <dbReference type="UniProtKB" id="Q9HWF9"/>
    </source>
</evidence>
<evidence type="ECO:0000255" key="3">
    <source>
        <dbReference type="PROSITE-ProRule" id="PRU00085"/>
    </source>
</evidence>
<evidence type="ECO:0000303" key="4">
    <source>
    </source>
</evidence>
<evidence type="ECO:0000305" key="5"/>
<evidence type="ECO:0000305" key="6">
    <source>
    </source>
</evidence>
<feature type="chain" id="PRO_0000192596" description="Bacterial ferritin">
    <location>
        <begin position="1"/>
        <end position="164"/>
    </location>
</feature>
<feature type="domain" description="Ferritin-like diiron" evidence="3">
    <location>
        <begin position="1"/>
        <end position="147"/>
    </location>
</feature>
<feature type="binding site" evidence="3">
    <location>
        <position position="18"/>
    </location>
    <ligand>
        <name>Fe cation</name>
        <dbReference type="ChEBI" id="CHEBI:24875"/>
        <label>1</label>
    </ligand>
</feature>
<feature type="binding site" evidence="3">
    <location>
        <position position="51"/>
    </location>
    <ligand>
        <name>Fe cation</name>
        <dbReference type="ChEBI" id="CHEBI:24875"/>
        <label>1</label>
    </ligand>
</feature>
<feature type="binding site" evidence="3">
    <location>
        <position position="51"/>
    </location>
    <ligand>
        <name>Fe cation</name>
        <dbReference type="ChEBI" id="CHEBI:24875"/>
        <label>2</label>
    </ligand>
</feature>
<feature type="binding site" evidence="3">
    <location>
        <position position="54"/>
    </location>
    <ligand>
        <name>Fe cation</name>
        <dbReference type="ChEBI" id="CHEBI:24875"/>
        <label>1</label>
    </ligand>
</feature>
<feature type="binding site" evidence="3">
    <location>
        <position position="94"/>
    </location>
    <ligand>
        <name>Fe cation</name>
        <dbReference type="ChEBI" id="CHEBI:24875"/>
        <label>2</label>
    </ligand>
</feature>
<feature type="binding site" evidence="3">
    <location>
        <position position="129"/>
    </location>
    <ligand>
        <name>Fe cation</name>
        <dbReference type="ChEBI" id="CHEBI:24875"/>
        <label>1</label>
    </ligand>
</feature>
<feature type="binding site" evidence="3">
    <location>
        <position position="129"/>
    </location>
    <ligand>
        <name>Fe cation</name>
        <dbReference type="ChEBI" id="CHEBI:24875"/>
        <label>2</label>
    </ligand>
</feature>
<feature type="binding site" evidence="3">
    <location>
        <position position="132"/>
    </location>
    <ligand>
        <name>Fe cation</name>
        <dbReference type="ChEBI" id="CHEBI:24875"/>
        <label>2</label>
    </ligand>
</feature>
<name>FTNA_PARME</name>
<dbReference type="EC" id="1.16.3.1" evidence="2"/>
<dbReference type="EMBL" id="AF001959">
    <property type="protein sequence ID" value="AAC91253.1"/>
    <property type="molecule type" value="Genomic_DNA"/>
</dbReference>
<dbReference type="SMR" id="O50171"/>
<dbReference type="GO" id="GO:0005829">
    <property type="term" value="C:cytosol"/>
    <property type="evidence" value="ECO:0007669"/>
    <property type="project" value="TreeGrafter"/>
</dbReference>
<dbReference type="GO" id="GO:0008199">
    <property type="term" value="F:ferric iron binding"/>
    <property type="evidence" value="ECO:0007669"/>
    <property type="project" value="InterPro"/>
</dbReference>
<dbReference type="GO" id="GO:0004322">
    <property type="term" value="F:ferroxidase activity"/>
    <property type="evidence" value="ECO:0007669"/>
    <property type="project" value="UniProtKB-EC"/>
</dbReference>
<dbReference type="GO" id="GO:0020037">
    <property type="term" value="F:heme binding"/>
    <property type="evidence" value="ECO:0007669"/>
    <property type="project" value="TreeGrafter"/>
</dbReference>
<dbReference type="GO" id="GO:0006879">
    <property type="term" value="P:intracellular iron ion homeostasis"/>
    <property type="evidence" value="ECO:0007669"/>
    <property type="project" value="UniProtKB-KW"/>
</dbReference>
<dbReference type="GO" id="GO:0006826">
    <property type="term" value="P:iron ion transport"/>
    <property type="evidence" value="ECO:0007669"/>
    <property type="project" value="UniProtKB-KW"/>
</dbReference>
<dbReference type="CDD" id="cd00907">
    <property type="entry name" value="Bacterioferritin"/>
    <property type="match status" value="1"/>
</dbReference>
<dbReference type="Gene3D" id="1.20.1260.10">
    <property type="match status" value="1"/>
</dbReference>
<dbReference type="InterPro" id="IPR002024">
    <property type="entry name" value="Bacterioferritin"/>
</dbReference>
<dbReference type="InterPro" id="IPR012347">
    <property type="entry name" value="Ferritin-like"/>
</dbReference>
<dbReference type="InterPro" id="IPR009040">
    <property type="entry name" value="Ferritin-like_diiron"/>
</dbReference>
<dbReference type="InterPro" id="IPR009078">
    <property type="entry name" value="Ferritin-like_SF"/>
</dbReference>
<dbReference type="InterPro" id="IPR008331">
    <property type="entry name" value="Ferritin_DPS_dom"/>
</dbReference>
<dbReference type="NCBIfam" id="TIGR00754">
    <property type="entry name" value="bfr"/>
    <property type="match status" value="1"/>
</dbReference>
<dbReference type="PANTHER" id="PTHR30295">
    <property type="entry name" value="BACTERIOFERRITIN"/>
    <property type="match status" value="1"/>
</dbReference>
<dbReference type="PANTHER" id="PTHR30295:SF9">
    <property type="entry name" value="BACTERIOFERRITIN"/>
    <property type="match status" value="1"/>
</dbReference>
<dbReference type="Pfam" id="PF00210">
    <property type="entry name" value="Ferritin"/>
    <property type="match status" value="1"/>
</dbReference>
<dbReference type="PIRSF" id="PIRSF002560">
    <property type="entry name" value="Bacterioferritin"/>
    <property type="match status" value="1"/>
</dbReference>
<dbReference type="PRINTS" id="PR00601">
    <property type="entry name" value="BACFERRITIN"/>
</dbReference>
<dbReference type="SUPFAM" id="SSF47240">
    <property type="entry name" value="Ferritin-like"/>
    <property type="match status" value="1"/>
</dbReference>
<dbReference type="PROSITE" id="PS00549">
    <property type="entry name" value="BACTERIOFERRITIN"/>
    <property type="match status" value="1"/>
</dbReference>
<dbReference type="PROSITE" id="PS50905">
    <property type="entry name" value="FERRITIN_LIKE"/>
    <property type="match status" value="1"/>
</dbReference>